<reference key="1">
    <citation type="journal article" date="2002" name="Nature">
        <title>The genome sequence of Schizosaccharomyces pombe.</title>
        <authorList>
            <person name="Wood V."/>
            <person name="Gwilliam R."/>
            <person name="Rajandream M.A."/>
            <person name="Lyne M.H."/>
            <person name="Lyne R."/>
            <person name="Stewart A."/>
            <person name="Sgouros J.G."/>
            <person name="Peat N."/>
            <person name="Hayles J."/>
            <person name="Baker S.G."/>
            <person name="Basham D."/>
            <person name="Bowman S."/>
            <person name="Brooks K."/>
            <person name="Brown D."/>
            <person name="Brown S."/>
            <person name="Chillingworth T."/>
            <person name="Churcher C.M."/>
            <person name="Collins M."/>
            <person name="Connor R."/>
            <person name="Cronin A."/>
            <person name="Davis P."/>
            <person name="Feltwell T."/>
            <person name="Fraser A."/>
            <person name="Gentles S."/>
            <person name="Goble A."/>
            <person name="Hamlin N."/>
            <person name="Harris D.E."/>
            <person name="Hidalgo J."/>
            <person name="Hodgson G."/>
            <person name="Holroyd S."/>
            <person name="Hornsby T."/>
            <person name="Howarth S."/>
            <person name="Huckle E.J."/>
            <person name="Hunt S."/>
            <person name="Jagels K."/>
            <person name="James K.D."/>
            <person name="Jones L."/>
            <person name="Jones M."/>
            <person name="Leather S."/>
            <person name="McDonald S."/>
            <person name="McLean J."/>
            <person name="Mooney P."/>
            <person name="Moule S."/>
            <person name="Mungall K.L."/>
            <person name="Murphy L.D."/>
            <person name="Niblett D."/>
            <person name="Odell C."/>
            <person name="Oliver K."/>
            <person name="O'Neil S."/>
            <person name="Pearson D."/>
            <person name="Quail M.A."/>
            <person name="Rabbinowitsch E."/>
            <person name="Rutherford K.M."/>
            <person name="Rutter S."/>
            <person name="Saunders D."/>
            <person name="Seeger K."/>
            <person name="Sharp S."/>
            <person name="Skelton J."/>
            <person name="Simmonds M.N."/>
            <person name="Squares R."/>
            <person name="Squares S."/>
            <person name="Stevens K."/>
            <person name="Taylor K."/>
            <person name="Taylor R.G."/>
            <person name="Tivey A."/>
            <person name="Walsh S.V."/>
            <person name="Warren T."/>
            <person name="Whitehead S."/>
            <person name="Woodward J.R."/>
            <person name="Volckaert G."/>
            <person name="Aert R."/>
            <person name="Robben J."/>
            <person name="Grymonprez B."/>
            <person name="Weltjens I."/>
            <person name="Vanstreels E."/>
            <person name="Rieger M."/>
            <person name="Schaefer M."/>
            <person name="Mueller-Auer S."/>
            <person name="Gabel C."/>
            <person name="Fuchs M."/>
            <person name="Duesterhoeft A."/>
            <person name="Fritzc C."/>
            <person name="Holzer E."/>
            <person name="Moestl D."/>
            <person name="Hilbert H."/>
            <person name="Borzym K."/>
            <person name="Langer I."/>
            <person name="Beck A."/>
            <person name="Lehrach H."/>
            <person name="Reinhardt R."/>
            <person name="Pohl T.M."/>
            <person name="Eger P."/>
            <person name="Zimmermann W."/>
            <person name="Wedler H."/>
            <person name="Wambutt R."/>
            <person name="Purnelle B."/>
            <person name="Goffeau A."/>
            <person name="Cadieu E."/>
            <person name="Dreano S."/>
            <person name="Gloux S."/>
            <person name="Lelaure V."/>
            <person name="Mottier S."/>
            <person name="Galibert F."/>
            <person name="Aves S.J."/>
            <person name="Xiang Z."/>
            <person name="Hunt C."/>
            <person name="Moore K."/>
            <person name="Hurst S.M."/>
            <person name="Lucas M."/>
            <person name="Rochet M."/>
            <person name="Gaillardin C."/>
            <person name="Tallada V.A."/>
            <person name="Garzon A."/>
            <person name="Thode G."/>
            <person name="Daga R.R."/>
            <person name="Cruzado L."/>
            <person name="Jimenez J."/>
            <person name="Sanchez M."/>
            <person name="del Rey F."/>
            <person name="Benito J."/>
            <person name="Dominguez A."/>
            <person name="Revuelta J.L."/>
            <person name="Moreno S."/>
            <person name="Armstrong J."/>
            <person name="Forsburg S.L."/>
            <person name="Cerutti L."/>
            <person name="Lowe T."/>
            <person name="McCombie W.R."/>
            <person name="Paulsen I."/>
            <person name="Potashkin J."/>
            <person name="Shpakovski G.V."/>
            <person name="Ussery D."/>
            <person name="Barrell B.G."/>
            <person name="Nurse P."/>
        </authorList>
    </citation>
    <scope>NUCLEOTIDE SEQUENCE [LARGE SCALE GENOMIC DNA]</scope>
    <source>
        <strain>972 / ATCC 24843</strain>
    </source>
</reference>
<evidence type="ECO:0000255" key="1"/>
<evidence type="ECO:0000305" key="2"/>
<comment type="subcellular location">
    <subcellularLocation>
        <location evidence="2">Membrane</location>
        <topology evidence="2">Multi-pass membrane protein</topology>
    </subcellularLocation>
</comment>
<accession>O74949</accession>
<accession>O59820</accession>
<keyword id="KW-0472">Membrane</keyword>
<keyword id="KW-1185">Reference proteome</keyword>
<keyword id="KW-0812">Transmembrane</keyword>
<keyword id="KW-1133">Transmembrane helix</keyword>
<proteinExistence type="predicted"/>
<feature type="chain" id="PRO_0000116811" description="Uncharacterized protein C553.12c">
    <location>
        <begin position="1"/>
        <end position="521"/>
    </location>
</feature>
<feature type="transmembrane region" description="Helical" evidence="1">
    <location>
        <begin position="103"/>
        <end position="123"/>
    </location>
</feature>
<feature type="transmembrane region" description="Helical" evidence="1">
    <location>
        <begin position="136"/>
        <end position="156"/>
    </location>
</feature>
<feature type="transmembrane region" description="Helical" evidence="1">
    <location>
        <begin position="177"/>
        <end position="197"/>
    </location>
</feature>
<feature type="transmembrane region" description="Helical" evidence="1">
    <location>
        <begin position="200"/>
        <end position="220"/>
    </location>
</feature>
<feature type="transmembrane region" description="Helical" evidence="1">
    <location>
        <begin position="259"/>
        <end position="279"/>
    </location>
</feature>
<feature type="transmembrane region" description="Helical" evidence="1">
    <location>
        <begin position="299"/>
        <end position="319"/>
    </location>
</feature>
<feature type="transmembrane region" description="Helical" evidence="1">
    <location>
        <begin position="327"/>
        <end position="346"/>
    </location>
</feature>
<feature type="transmembrane region" description="Helical" evidence="1">
    <location>
        <begin position="358"/>
        <end position="378"/>
    </location>
</feature>
<feature type="transmembrane region" description="Helical" evidence="1">
    <location>
        <begin position="411"/>
        <end position="431"/>
    </location>
</feature>
<feature type="transmembrane region" description="Helical" evidence="1">
    <location>
        <begin position="450"/>
        <end position="470"/>
    </location>
</feature>
<protein>
    <recommendedName>
        <fullName>Uncharacterized protein C553.12c</fullName>
    </recommendedName>
</protein>
<sequence length="521" mass="60569">MSDSFDAAASHFHARSSVNDSSFHLSRQEEAELLEGALHAPYPEELLFDDDEYTAKTQYDGPRYAMPTMFYPNKPTPGWPLNYVFGNERSRFEKILSNFVLRNLMLQVLAPCFVLLWCAVPMPRYEDSQGTVRIRFWFFLIFYYGIYNAVGLLWITKLFHIYSVNWCPSKLGGTITYILFWMFSLLVGSLVVYFTAWRQITFTWITLMFISMIIPIGISFSKLWKKHSRRTAQFLTQLALLEPEVRSNAVLETIGWKDAYAHYSWFIVVLLVTLLVYIVGEYLTNLYMSTLPHSSTVAIMYVYSWTGTVSLCNLVSSWILNTKTHSYALVTVFKLYFELTLQVYVRNLYARLESPQQFVLVQIASSLTMMSVIPLITMSRTVFRLNVLMTKSMDSYVVYRKNMGRNFYVKCVASNVSMLSFLGWSLILHFGSNAPLYPYFSFSKEEPYSFKLTFYASTAVWISEMVASYLTRLIMRKFYDFEVALEAIRDFVEYPDMIPTFIAVSIHVLQNVVFSIISLHF</sequence>
<name>YJBC_SCHPO</name>
<dbReference type="EMBL" id="CU329672">
    <property type="protein sequence ID" value="CAA19140.2"/>
    <property type="molecule type" value="Genomic_DNA"/>
</dbReference>
<dbReference type="PIR" id="T41621">
    <property type="entry name" value="T41621"/>
</dbReference>
<dbReference type="RefSeq" id="NP_587762.2">
    <property type="nucleotide sequence ID" value="NM_001022755.1"/>
</dbReference>
<dbReference type="BioGRID" id="276009">
    <property type="interactions" value="2"/>
</dbReference>
<dbReference type="iPTMnet" id="O74949"/>
<dbReference type="PaxDb" id="4896-SPCC553.12c.1"/>
<dbReference type="EnsemblFungi" id="SPCC553.12c.1">
    <property type="protein sequence ID" value="SPCC553.12c.1:pep"/>
    <property type="gene ID" value="SPCC553.12c"/>
</dbReference>
<dbReference type="KEGG" id="spo:2539446"/>
<dbReference type="PomBase" id="SPCC553.12c"/>
<dbReference type="VEuPathDB" id="FungiDB:SPCC553.12c"/>
<dbReference type="eggNOG" id="ENOG502QV47">
    <property type="taxonomic scope" value="Eukaryota"/>
</dbReference>
<dbReference type="HOGENOM" id="CLU_012743_0_0_1"/>
<dbReference type="InParanoid" id="O74949"/>
<dbReference type="OMA" id="WWSRYGL"/>
<dbReference type="PhylomeDB" id="O74949"/>
<dbReference type="PRO" id="PR:O74949"/>
<dbReference type="Proteomes" id="UP000002485">
    <property type="component" value="Chromosome III"/>
</dbReference>
<dbReference type="GO" id="GO:0016020">
    <property type="term" value="C:membrane"/>
    <property type="evidence" value="ECO:0007669"/>
    <property type="project" value="UniProtKB-SubCell"/>
</dbReference>
<dbReference type="GO" id="GO:0022857">
    <property type="term" value="F:transmembrane transporter activity"/>
    <property type="evidence" value="ECO:0000255"/>
    <property type="project" value="PomBase"/>
</dbReference>
<dbReference type="InterPro" id="IPR039966">
    <property type="entry name" value="C553.12c"/>
</dbReference>
<dbReference type="PANTHER" id="PTHR40467">
    <property type="match status" value="1"/>
</dbReference>
<dbReference type="PANTHER" id="PTHR40467:SF1">
    <property type="match status" value="1"/>
</dbReference>
<organism>
    <name type="scientific">Schizosaccharomyces pombe (strain 972 / ATCC 24843)</name>
    <name type="common">Fission yeast</name>
    <dbReference type="NCBI Taxonomy" id="284812"/>
    <lineage>
        <taxon>Eukaryota</taxon>
        <taxon>Fungi</taxon>
        <taxon>Dikarya</taxon>
        <taxon>Ascomycota</taxon>
        <taxon>Taphrinomycotina</taxon>
        <taxon>Schizosaccharomycetes</taxon>
        <taxon>Schizosaccharomycetales</taxon>
        <taxon>Schizosaccharomycetaceae</taxon>
        <taxon>Schizosaccharomyces</taxon>
    </lineage>
</organism>
<gene>
    <name type="ORF">SPCC553.12c</name>
    <name type="ORF">SPCC794.13</name>
</gene>